<keyword id="KW-0150">Chloroplast</keyword>
<keyword id="KW-0472">Membrane</keyword>
<keyword id="KW-0602">Photosynthesis</keyword>
<keyword id="KW-0604">Photosystem II</keyword>
<keyword id="KW-0934">Plastid</keyword>
<keyword id="KW-0674">Reaction center</keyword>
<keyword id="KW-0793">Thylakoid</keyword>
<keyword id="KW-0812">Transmembrane</keyword>
<keyword id="KW-1133">Transmembrane helix</keyword>
<organism>
    <name type="scientific">Piper cenocladum</name>
    <name type="common">Ant piper</name>
    <dbReference type="NCBI Taxonomy" id="398741"/>
    <lineage>
        <taxon>Eukaryota</taxon>
        <taxon>Viridiplantae</taxon>
        <taxon>Streptophyta</taxon>
        <taxon>Embryophyta</taxon>
        <taxon>Tracheophyta</taxon>
        <taxon>Spermatophyta</taxon>
        <taxon>Magnoliopsida</taxon>
        <taxon>Magnoliidae</taxon>
        <taxon>Piperales</taxon>
        <taxon>Piperaceae</taxon>
        <taxon>Piper</taxon>
    </lineage>
</organism>
<reference key="1">
    <citation type="journal article" date="2006" name="BMC Evol. Biol.">
        <title>Complete plastid genome sequences of Drimys, Liriodendron, and Piper: implications for the phylogenetic relationships of magnoliids.</title>
        <authorList>
            <person name="Cai Z."/>
            <person name="Penaflor C."/>
            <person name="Kuehl J.V."/>
            <person name="Leebens-Mack J."/>
            <person name="Carlson J.E."/>
            <person name="dePamphilis C.W."/>
            <person name="Boore J.L."/>
            <person name="Jansen R.K."/>
        </authorList>
    </citation>
    <scope>NUCLEOTIDE SEQUENCE [LARGE SCALE GENOMIC DNA]</scope>
</reference>
<feature type="chain" id="PRO_0000276251" description="Photosystem II reaction center protein M">
    <location>
        <begin position="1"/>
        <end position="34"/>
    </location>
</feature>
<feature type="transmembrane region" description="Helical" evidence="1">
    <location>
        <begin position="5"/>
        <end position="25"/>
    </location>
</feature>
<sequence>MEVNILAFIATVLFILVPTAFLLIIYVKTVSQND</sequence>
<name>PSBM_PIPCE</name>
<proteinExistence type="inferred from homology"/>
<protein>
    <recommendedName>
        <fullName evidence="1">Photosystem II reaction center protein M</fullName>
        <shortName evidence="1">PSII-M</shortName>
    </recommendedName>
</protein>
<comment type="function">
    <text evidence="1">One of the components of the core complex of photosystem II (PSII). PSII is a light-driven water:plastoquinone oxidoreductase that uses light energy to abstract electrons from H(2)O, generating O(2) and a proton gradient subsequently used for ATP formation. It consists of a core antenna complex that captures photons, and an electron transfer chain that converts photonic excitation into a charge separation. This subunit is found at the monomer-monomer interface.</text>
</comment>
<comment type="subunit">
    <text evidence="1">PSII is composed of 1 copy each of membrane proteins PsbA, PsbB, PsbC, PsbD, PsbE, PsbF, PsbH, PsbI, PsbJ, PsbK, PsbL, PsbM, PsbT, PsbX, PsbY, PsbZ, Psb30/Ycf12, at least 3 peripheral proteins of the oxygen-evolving complex and a large number of cofactors. It forms dimeric complexes.</text>
</comment>
<comment type="subcellular location">
    <subcellularLocation>
        <location evidence="1">Plastid</location>
        <location evidence="1">Chloroplast thylakoid membrane</location>
        <topology evidence="1">Single-pass membrane protein</topology>
    </subcellularLocation>
</comment>
<comment type="similarity">
    <text evidence="1">Belongs to the PsbM family.</text>
</comment>
<geneLocation type="chloroplast"/>
<gene>
    <name evidence="1" type="primary">psbM</name>
</gene>
<accession>Q06GR6</accession>
<evidence type="ECO:0000255" key="1">
    <source>
        <dbReference type="HAMAP-Rule" id="MF_00438"/>
    </source>
</evidence>
<dbReference type="EMBL" id="DQ887677">
    <property type="protein sequence ID" value="ABI14466.1"/>
    <property type="molecule type" value="Genomic_DNA"/>
</dbReference>
<dbReference type="RefSeq" id="YP_784467.1">
    <property type="nucleotide sequence ID" value="NC_008457.1"/>
</dbReference>
<dbReference type="SMR" id="Q06GR6"/>
<dbReference type="GeneID" id="4363716"/>
<dbReference type="GO" id="GO:0009535">
    <property type="term" value="C:chloroplast thylakoid membrane"/>
    <property type="evidence" value="ECO:0007669"/>
    <property type="project" value="UniProtKB-SubCell"/>
</dbReference>
<dbReference type="GO" id="GO:0009523">
    <property type="term" value="C:photosystem II"/>
    <property type="evidence" value="ECO:0007669"/>
    <property type="project" value="UniProtKB-KW"/>
</dbReference>
<dbReference type="GO" id="GO:0019684">
    <property type="term" value="P:photosynthesis, light reaction"/>
    <property type="evidence" value="ECO:0007669"/>
    <property type="project" value="InterPro"/>
</dbReference>
<dbReference type="HAMAP" id="MF_00438">
    <property type="entry name" value="PSII_PsbM"/>
    <property type="match status" value="1"/>
</dbReference>
<dbReference type="InterPro" id="IPR007826">
    <property type="entry name" value="PSII_PsbM"/>
</dbReference>
<dbReference type="InterPro" id="IPR037269">
    <property type="entry name" value="PSII_PsbM_sf"/>
</dbReference>
<dbReference type="NCBIfam" id="TIGR03038">
    <property type="entry name" value="PS_II_psbM"/>
    <property type="match status" value="1"/>
</dbReference>
<dbReference type="PANTHER" id="PTHR35774">
    <property type="entry name" value="PHOTOSYSTEM II REACTION CENTER PROTEIN M"/>
    <property type="match status" value="1"/>
</dbReference>
<dbReference type="PANTHER" id="PTHR35774:SF1">
    <property type="entry name" value="PHOTOSYSTEM II REACTION CENTER PROTEIN M"/>
    <property type="match status" value="1"/>
</dbReference>
<dbReference type="Pfam" id="PF05151">
    <property type="entry name" value="PsbM"/>
    <property type="match status" value="1"/>
</dbReference>
<dbReference type="SUPFAM" id="SSF161033">
    <property type="entry name" value="Photosystem II reaction center protein M, PsbM"/>
    <property type="match status" value="1"/>
</dbReference>